<feature type="signal peptide" evidence="3">
    <location>
        <begin position="1"/>
        <end position="36"/>
    </location>
</feature>
<feature type="chain" id="PRO_0000016975" description="Beta-lactamase">
    <location>
        <begin position="37"/>
        <end position="306"/>
    </location>
</feature>
<feature type="active site" description="Acyl-ester intermediate" evidence="2">
    <location>
        <position position="89"/>
    </location>
</feature>
<feature type="binding site" evidence="1">
    <location>
        <begin position="251"/>
        <end position="253"/>
    </location>
    <ligand>
        <name>substrate</name>
    </ligand>
</feature>
<feature type="sequence conflict" description="In Ref. 1; CAA84711." evidence="4" ref="1">
    <original>K</original>
    <variation>N</variation>
    <location>
        <position position="51"/>
    </location>
</feature>
<feature type="sequence conflict" description="In Ref. 1; CAA84711." evidence="4" ref="1">
    <original>AAV</original>
    <variation>GGF</variation>
    <location>
        <begin position="97"/>
        <end position="99"/>
    </location>
</feature>
<feature type="helix" evidence="6">
    <location>
        <begin position="48"/>
        <end position="60"/>
    </location>
</feature>
<feature type="strand" evidence="6">
    <location>
        <begin position="63"/>
        <end position="70"/>
    </location>
</feature>
<feature type="turn" evidence="6">
    <location>
        <begin position="71"/>
        <end position="73"/>
    </location>
</feature>
<feature type="strand" evidence="6">
    <location>
        <begin position="76"/>
        <end position="80"/>
    </location>
</feature>
<feature type="helix" evidence="6">
    <location>
        <begin position="88"/>
        <end position="90"/>
    </location>
</feature>
<feature type="helix" evidence="6">
    <location>
        <begin position="91"/>
        <end position="102"/>
    </location>
</feature>
<feature type="helix" evidence="6">
    <location>
        <begin position="105"/>
        <end position="109"/>
    </location>
</feature>
<feature type="strand" evidence="6">
    <location>
        <begin position="110"/>
        <end position="112"/>
    </location>
</feature>
<feature type="helix" evidence="6">
    <location>
        <begin position="116"/>
        <end position="118"/>
    </location>
</feature>
<feature type="helix" evidence="6">
    <location>
        <begin position="126"/>
        <end position="129"/>
    </location>
</feature>
<feature type="turn" evidence="6">
    <location>
        <begin position="130"/>
        <end position="132"/>
    </location>
</feature>
<feature type="helix" evidence="6">
    <location>
        <begin position="136"/>
        <end position="146"/>
    </location>
</feature>
<feature type="helix" evidence="6">
    <location>
        <begin position="149"/>
        <end position="158"/>
    </location>
</feature>
<feature type="helix" evidence="6">
    <location>
        <begin position="161"/>
        <end position="171"/>
    </location>
</feature>
<feature type="helix" evidence="6">
    <location>
        <begin position="185"/>
        <end position="187"/>
    </location>
</feature>
<feature type="helix" evidence="6">
    <location>
        <begin position="200"/>
        <end position="211"/>
    </location>
</feature>
<feature type="helix" evidence="6">
    <location>
        <begin position="218"/>
        <end position="228"/>
    </location>
</feature>
<feature type="helix" evidence="6">
    <location>
        <begin position="232"/>
        <end position="234"/>
    </location>
</feature>
<feature type="turn" evidence="6">
    <location>
        <begin position="235"/>
        <end position="237"/>
    </location>
</feature>
<feature type="helix" evidence="6">
    <location>
        <begin position="238"/>
        <end position="241"/>
    </location>
</feature>
<feature type="strand" evidence="6">
    <location>
        <begin position="247"/>
        <end position="255"/>
    </location>
</feature>
<feature type="turn" evidence="6">
    <location>
        <begin position="256"/>
        <end position="258"/>
    </location>
</feature>
<feature type="strand" evidence="6">
    <location>
        <begin position="259"/>
        <end position="267"/>
    </location>
</feature>
<feature type="strand" evidence="6">
    <location>
        <begin position="274"/>
        <end position="281"/>
    </location>
</feature>
<feature type="helix" evidence="6">
    <location>
        <begin position="291"/>
        <end position="304"/>
    </location>
</feature>
<protein>
    <recommendedName>
        <fullName>Beta-lactamase</fullName>
        <ecNumber>3.5.2.6</ecNumber>
    </recommendedName>
    <alternativeName>
        <fullName>Penicillinase</fullName>
    </alternativeName>
</protein>
<keyword id="KW-0002">3D-structure</keyword>
<keyword id="KW-0046">Antibiotic resistance</keyword>
<keyword id="KW-0903">Direct protein sequencing</keyword>
<keyword id="KW-0378">Hydrolase</keyword>
<keyword id="KW-1185">Reference proteome</keyword>
<keyword id="KW-0964">Secreted</keyword>
<keyword id="KW-0732">Signal</keyword>
<comment type="function">
    <text>This protein is a beta-lactamase with a substrate specificity for penicillins.</text>
</comment>
<comment type="catalytic activity">
    <reaction evidence="2">
        <text>a beta-lactam + H2O = a substituted beta-amino acid</text>
        <dbReference type="Rhea" id="RHEA:20401"/>
        <dbReference type="ChEBI" id="CHEBI:15377"/>
        <dbReference type="ChEBI" id="CHEBI:35627"/>
        <dbReference type="ChEBI" id="CHEBI:140347"/>
        <dbReference type="EC" id="3.5.2.6"/>
    </reaction>
</comment>
<comment type="subcellular location">
    <subcellularLocation>
        <location evidence="3">Secreted</location>
    </subcellularLocation>
</comment>
<comment type="miscellaneous">
    <text evidence="5">The class A beta-lactamase family has a specific amino-acid numbering system, sometimes called Ambler or ABL numbering and often misspelt as Amber. A multiple sequence alignment was used to derive a consensus sequence and then the consensus was numbered taking into account insertions and deletions. This allows use of identical numbers, e.g. for active site residues, despite differences in protein length. UniProt always uses natural numbering of residues, hence there appear to be differences in numbering between this entry and some papers.</text>
</comment>
<comment type="similarity">
    <text evidence="4">Belongs to the class-A beta-lactamase family.</text>
</comment>
<reference key="1">
    <citation type="submission" date="1994-08" db="EMBL/GenBank/DDBJ databases">
        <title>Identification of penicillinase-encoding genes of Bacillus amyloliquefaciens and Bacillus subtilis.</title>
        <authorList>
            <person name="van Dijl J.M."/>
            <person name="de Jong A."/>
            <person name="Nauta A."/>
            <person name="Venema G."/>
            <person name="Bron S."/>
        </authorList>
    </citation>
    <scope>NUCLEOTIDE SEQUENCE [GENOMIC DNA]</scope>
    <source>
        <strain>168 / 6GM</strain>
    </source>
</reference>
<reference key="2">
    <citation type="submission" date="1997-11" db="EMBL/GenBank/DDBJ databases">
        <title>Sequence analysis of the Bacillus subtilis chromosome region between the terC and odhAB loci cloned in a yeast artificial chromosome.</title>
        <authorList>
            <person name="Lapidus A."/>
            <person name="Galleron N."/>
            <person name="Sorokin A."/>
            <person name="Ehrlich S.D."/>
        </authorList>
    </citation>
    <scope>NUCLEOTIDE SEQUENCE [GENOMIC DNA]</scope>
</reference>
<reference key="3">
    <citation type="journal article" date="1997" name="Nature">
        <title>The complete genome sequence of the Gram-positive bacterium Bacillus subtilis.</title>
        <authorList>
            <person name="Kunst F."/>
            <person name="Ogasawara N."/>
            <person name="Moszer I."/>
            <person name="Albertini A.M."/>
            <person name="Alloni G."/>
            <person name="Azevedo V."/>
            <person name="Bertero M.G."/>
            <person name="Bessieres P."/>
            <person name="Bolotin A."/>
            <person name="Borchert S."/>
            <person name="Borriss R."/>
            <person name="Boursier L."/>
            <person name="Brans A."/>
            <person name="Braun M."/>
            <person name="Brignell S.C."/>
            <person name="Bron S."/>
            <person name="Brouillet S."/>
            <person name="Bruschi C.V."/>
            <person name="Caldwell B."/>
            <person name="Capuano V."/>
            <person name="Carter N.M."/>
            <person name="Choi S.-K."/>
            <person name="Codani J.-J."/>
            <person name="Connerton I.F."/>
            <person name="Cummings N.J."/>
            <person name="Daniel R.A."/>
            <person name="Denizot F."/>
            <person name="Devine K.M."/>
            <person name="Duesterhoeft A."/>
            <person name="Ehrlich S.D."/>
            <person name="Emmerson P.T."/>
            <person name="Entian K.-D."/>
            <person name="Errington J."/>
            <person name="Fabret C."/>
            <person name="Ferrari E."/>
            <person name="Foulger D."/>
            <person name="Fritz C."/>
            <person name="Fujita M."/>
            <person name="Fujita Y."/>
            <person name="Fuma S."/>
            <person name="Galizzi A."/>
            <person name="Galleron N."/>
            <person name="Ghim S.-Y."/>
            <person name="Glaser P."/>
            <person name="Goffeau A."/>
            <person name="Golightly E.J."/>
            <person name="Grandi G."/>
            <person name="Guiseppi G."/>
            <person name="Guy B.J."/>
            <person name="Haga K."/>
            <person name="Haiech J."/>
            <person name="Harwood C.R."/>
            <person name="Henaut A."/>
            <person name="Hilbert H."/>
            <person name="Holsappel S."/>
            <person name="Hosono S."/>
            <person name="Hullo M.-F."/>
            <person name="Itaya M."/>
            <person name="Jones L.-M."/>
            <person name="Joris B."/>
            <person name="Karamata D."/>
            <person name="Kasahara Y."/>
            <person name="Klaerr-Blanchard M."/>
            <person name="Klein C."/>
            <person name="Kobayashi Y."/>
            <person name="Koetter P."/>
            <person name="Koningstein G."/>
            <person name="Krogh S."/>
            <person name="Kumano M."/>
            <person name="Kurita K."/>
            <person name="Lapidus A."/>
            <person name="Lardinois S."/>
            <person name="Lauber J."/>
            <person name="Lazarevic V."/>
            <person name="Lee S.-M."/>
            <person name="Levine A."/>
            <person name="Liu H."/>
            <person name="Masuda S."/>
            <person name="Mauel C."/>
            <person name="Medigue C."/>
            <person name="Medina N."/>
            <person name="Mellado R.P."/>
            <person name="Mizuno M."/>
            <person name="Moestl D."/>
            <person name="Nakai S."/>
            <person name="Noback M."/>
            <person name="Noone D."/>
            <person name="O'Reilly M."/>
            <person name="Ogawa K."/>
            <person name="Ogiwara A."/>
            <person name="Oudega B."/>
            <person name="Park S.-H."/>
            <person name="Parro V."/>
            <person name="Pohl T.M."/>
            <person name="Portetelle D."/>
            <person name="Porwollik S."/>
            <person name="Prescott A.M."/>
            <person name="Presecan E."/>
            <person name="Pujic P."/>
            <person name="Purnelle B."/>
            <person name="Rapoport G."/>
            <person name="Rey M."/>
            <person name="Reynolds S."/>
            <person name="Rieger M."/>
            <person name="Rivolta C."/>
            <person name="Rocha E."/>
            <person name="Roche B."/>
            <person name="Rose M."/>
            <person name="Sadaie Y."/>
            <person name="Sato T."/>
            <person name="Scanlan E."/>
            <person name="Schleich S."/>
            <person name="Schroeter R."/>
            <person name="Scoffone F."/>
            <person name="Sekiguchi J."/>
            <person name="Sekowska A."/>
            <person name="Seror S.J."/>
            <person name="Serror P."/>
            <person name="Shin B.-S."/>
            <person name="Soldo B."/>
            <person name="Sorokin A."/>
            <person name="Tacconi E."/>
            <person name="Takagi T."/>
            <person name="Takahashi H."/>
            <person name="Takemaru K."/>
            <person name="Takeuchi M."/>
            <person name="Tamakoshi A."/>
            <person name="Tanaka T."/>
            <person name="Terpstra P."/>
            <person name="Tognoni A."/>
            <person name="Tosato V."/>
            <person name="Uchiyama S."/>
            <person name="Vandenbol M."/>
            <person name="Vannier F."/>
            <person name="Vassarotti A."/>
            <person name="Viari A."/>
            <person name="Wambutt R."/>
            <person name="Wedler E."/>
            <person name="Wedler H."/>
            <person name="Weitzenegger T."/>
            <person name="Winters P."/>
            <person name="Wipat A."/>
            <person name="Yamamoto H."/>
            <person name="Yamane K."/>
            <person name="Yasumoto K."/>
            <person name="Yata K."/>
            <person name="Yoshida K."/>
            <person name="Yoshikawa H.-F."/>
            <person name="Zumstein E."/>
            <person name="Yoshikawa H."/>
            <person name="Danchin A."/>
        </authorList>
    </citation>
    <scope>NUCLEOTIDE SEQUENCE [LARGE SCALE GENOMIC DNA]</scope>
    <source>
        <strain>168</strain>
    </source>
</reference>
<reference key="4">
    <citation type="journal article" date="2000" name="Microbiology">
        <title>Proteome analysis of Bacillus subtilis extracellular proteins: a two-dimensional protein electrophoretic study.</title>
        <authorList>
            <person name="Hirose I."/>
            <person name="Sano K."/>
            <person name="Shioda I."/>
            <person name="Kumano M."/>
            <person name="Nakamura K."/>
            <person name="Yamane K."/>
        </authorList>
    </citation>
    <scope>PROTEIN SEQUENCE OF 37-47</scope>
    <scope>SUBCELLULAR LOCATION</scope>
    <source>
        <strain>168</strain>
    </source>
</reference>
<reference key="5">
    <citation type="journal article" date="1991" name="Biochem. J.">
        <title>A standard numbering scheme for the class A beta-lactamases.</title>
        <authorList>
            <person name="Ambler R.P."/>
            <person name="Coulson A.F."/>
            <person name="Frere J.M."/>
            <person name="Ghuysen J.M."/>
            <person name="Joris B."/>
            <person name="Forsman M."/>
            <person name="Levesque R.C."/>
            <person name="Tiraby G."/>
            <person name="Waley S.G."/>
        </authorList>
    </citation>
    <scope>AMINO ACID NUMBERING SCHEME</scope>
</reference>
<organism>
    <name type="scientific">Bacillus subtilis (strain 168)</name>
    <dbReference type="NCBI Taxonomy" id="224308"/>
    <lineage>
        <taxon>Bacteria</taxon>
        <taxon>Bacillati</taxon>
        <taxon>Bacillota</taxon>
        <taxon>Bacilli</taxon>
        <taxon>Bacillales</taxon>
        <taxon>Bacillaceae</taxon>
        <taxon>Bacillus</taxon>
    </lineage>
</organism>
<gene>
    <name type="primary">penP</name>
    <name type="ordered locus">BSU18800</name>
</gene>
<accession>P39824</accession>
<accession>O34848</accession>
<proteinExistence type="evidence at protein level"/>
<dbReference type="EC" id="3.5.2.6"/>
<dbReference type="EMBL" id="Z35652">
    <property type="protein sequence ID" value="CAA84711.1"/>
    <property type="molecule type" value="Genomic_DNA"/>
</dbReference>
<dbReference type="EMBL" id="AF027868">
    <property type="protein sequence ID" value="AAB84426.1"/>
    <property type="molecule type" value="Genomic_DNA"/>
</dbReference>
<dbReference type="EMBL" id="AL009126">
    <property type="protein sequence ID" value="CAB13772.1"/>
    <property type="molecule type" value="Genomic_DNA"/>
</dbReference>
<dbReference type="PIR" id="G69674">
    <property type="entry name" value="G69674"/>
</dbReference>
<dbReference type="RefSeq" id="NP_389761.1">
    <property type="nucleotide sequence ID" value="NC_000964.3"/>
</dbReference>
<dbReference type="PDB" id="6W2Z">
    <property type="method" value="X-ray"/>
    <property type="resolution" value="1.50 A"/>
    <property type="chains" value="A/B=34-306"/>
</dbReference>
<dbReference type="PDBsum" id="6W2Z"/>
<dbReference type="SMR" id="P39824"/>
<dbReference type="FunCoup" id="P39824">
    <property type="interactions" value="30"/>
</dbReference>
<dbReference type="STRING" id="224308.BSU18800"/>
<dbReference type="PaxDb" id="224308-BSU18800"/>
<dbReference type="EnsemblBacteria" id="CAB13772">
    <property type="protein sequence ID" value="CAB13772"/>
    <property type="gene ID" value="BSU_18800"/>
</dbReference>
<dbReference type="GeneID" id="940129"/>
<dbReference type="KEGG" id="bsu:BSU18800"/>
<dbReference type="PATRIC" id="fig|224308.179.peg.2049"/>
<dbReference type="eggNOG" id="COG2367">
    <property type="taxonomic scope" value="Bacteria"/>
</dbReference>
<dbReference type="InParanoid" id="P39824"/>
<dbReference type="OrthoDB" id="9784149at2"/>
<dbReference type="PhylomeDB" id="P39824"/>
<dbReference type="BioCyc" id="BSUB:BSU18800-MONOMER"/>
<dbReference type="Proteomes" id="UP000001570">
    <property type="component" value="Chromosome"/>
</dbReference>
<dbReference type="GO" id="GO:0005576">
    <property type="term" value="C:extracellular region"/>
    <property type="evidence" value="ECO:0007669"/>
    <property type="project" value="UniProtKB-SubCell"/>
</dbReference>
<dbReference type="GO" id="GO:0008800">
    <property type="term" value="F:beta-lactamase activity"/>
    <property type="evidence" value="ECO:0000318"/>
    <property type="project" value="GO_Central"/>
</dbReference>
<dbReference type="GO" id="GO:0030655">
    <property type="term" value="P:beta-lactam antibiotic catabolic process"/>
    <property type="evidence" value="ECO:0007669"/>
    <property type="project" value="InterPro"/>
</dbReference>
<dbReference type="GO" id="GO:0046677">
    <property type="term" value="P:response to antibiotic"/>
    <property type="evidence" value="ECO:0007669"/>
    <property type="project" value="UniProtKB-KW"/>
</dbReference>
<dbReference type="Gene3D" id="3.40.710.10">
    <property type="entry name" value="DD-peptidase/beta-lactamase superfamily"/>
    <property type="match status" value="1"/>
</dbReference>
<dbReference type="InterPro" id="IPR012338">
    <property type="entry name" value="Beta-lactam/transpept-like"/>
</dbReference>
<dbReference type="InterPro" id="IPR045155">
    <property type="entry name" value="Beta-lactam_cat"/>
</dbReference>
<dbReference type="InterPro" id="IPR000871">
    <property type="entry name" value="Beta-lactam_class-A"/>
</dbReference>
<dbReference type="InterPro" id="IPR023650">
    <property type="entry name" value="Beta-lactam_class-A_AS"/>
</dbReference>
<dbReference type="NCBIfam" id="NF033103">
    <property type="entry name" value="bla_class_A"/>
    <property type="match status" value="1"/>
</dbReference>
<dbReference type="NCBIfam" id="NF012167">
    <property type="entry name" value="classA_firm"/>
    <property type="match status" value="1"/>
</dbReference>
<dbReference type="PANTHER" id="PTHR35333">
    <property type="entry name" value="BETA-LACTAMASE"/>
    <property type="match status" value="1"/>
</dbReference>
<dbReference type="PANTHER" id="PTHR35333:SF3">
    <property type="entry name" value="BETA-LACTAMASE-TYPE TRANSPEPTIDASE FOLD CONTAINING PROTEIN"/>
    <property type="match status" value="1"/>
</dbReference>
<dbReference type="Pfam" id="PF13354">
    <property type="entry name" value="Beta-lactamase2"/>
    <property type="match status" value="1"/>
</dbReference>
<dbReference type="PRINTS" id="PR00118">
    <property type="entry name" value="BLACTAMASEA"/>
</dbReference>
<dbReference type="SUPFAM" id="SSF56601">
    <property type="entry name" value="beta-lactamase/transpeptidase-like"/>
    <property type="match status" value="1"/>
</dbReference>
<dbReference type="PROSITE" id="PS00146">
    <property type="entry name" value="BETA_LACTAMASE_A"/>
    <property type="match status" value="1"/>
</dbReference>
<name>BLAC_BACSU</name>
<evidence type="ECO:0000250" key="1"/>
<evidence type="ECO:0000255" key="2">
    <source>
        <dbReference type="PROSITE-ProRule" id="PRU10101"/>
    </source>
</evidence>
<evidence type="ECO:0000269" key="3">
    <source>
    </source>
</evidence>
<evidence type="ECO:0000305" key="4"/>
<evidence type="ECO:0000305" key="5">
    <source>
    </source>
</evidence>
<evidence type="ECO:0007829" key="6">
    <source>
        <dbReference type="PDB" id="6W2Z"/>
    </source>
</evidence>
<sequence>MKLKTKASIKFGICVGLLCLSITGFTPFFNSTHAEAKSIEDTNMASCITNKKFVQLEKKFDARLGVYAIDIGSNKTIAYRPNERFAYASTYKVLAAAAVLKKNSIEKLNEVIHYSKDDLVTYSPITEKHLDTGMSLKEISEAAIRYSDNTAGNILLQQLGGPKGFEKSLKQIGDHVTKAKRFETDLNSAIPGDIRDTSTAKALATDLKAFTLDNTLTTDKRMILTDWMRGNATGDELIRAGAPIGWEVGDKSGAGSYGTRNDIAIVWPPNRAPIVVAILSNRFTKDANYDNALIAEAAKVVLNDLK</sequence>